<organism>
    <name type="scientific">Escherichia coli (strain UTI89 / UPEC)</name>
    <dbReference type="NCBI Taxonomy" id="364106"/>
    <lineage>
        <taxon>Bacteria</taxon>
        <taxon>Pseudomonadati</taxon>
        <taxon>Pseudomonadota</taxon>
        <taxon>Gammaproteobacteria</taxon>
        <taxon>Enterobacterales</taxon>
        <taxon>Enterobacteriaceae</taxon>
        <taxon>Escherichia</taxon>
    </lineage>
</organism>
<accession>Q1RFM3</accession>
<proteinExistence type="inferred from homology"/>
<protein>
    <recommendedName>
        <fullName evidence="1">Oxygen-dependent choline dehydrogenase</fullName>
        <shortName evidence="1">CDH</shortName>
        <shortName evidence="1">CHD</shortName>
        <ecNumber evidence="1">1.1.99.1</ecNumber>
    </recommendedName>
    <alternativeName>
        <fullName evidence="1">Betaine aldehyde dehydrogenase</fullName>
        <shortName evidence="1">BADH</shortName>
        <ecNumber evidence="1">1.2.1.8</ecNumber>
    </alternativeName>
</protein>
<feature type="chain" id="PRO_0000258925" description="Oxygen-dependent choline dehydrogenase">
    <location>
        <begin position="1"/>
        <end position="562"/>
    </location>
</feature>
<feature type="active site" description="Proton acceptor" evidence="1">
    <location>
        <position position="473"/>
    </location>
</feature>
<feature type="binding site" evidence="1">
    <location>
        <begin position="4"/>
        <end position="33"/>
    </location>
    <ligand>
        <name>FAD</name>
        <dbReference type="ChEBI" id="CHEBI:57692"/>
    </ligand>
</feature>
<gene>
    <name evidence="1" type="primary">betA</name>
    <name type="ordered locus">UTI89_C0340</name>
</gene>
<name>BETA_ECOUT</name>
<comment type="function">
    <text evidence="1">Involved in the biosynthesis of the osmoprotectant glycine betaine. Catalyzes the oxidation of choline to betaine aldehyde and betaine aldehyde to glycine betaine at the same rate.</text>
</comment>
<comment type="catalytic activity">
    <reaction evidence="1">
        <text>choline + A = betaine aldehyde + AH2</text>
        <dbReference type="Rhea" id="RHEA:17433"/>
        <dbReference type="ChEBI" id="CHEBI:13193"/>
        <dbReference type="ChEBI" id="CHEBI:15354"/>
        <dbReference type="ChEBI" id="CHEBI:15710"/>
        <dbReference type="ChEBI" id="CHEBI:17499"/>
        <dbReference type="EC" id="1.1.99.1"/>
    </reaction>
</comment>
<comment type="catalytic activity">
    <reaction evidence="1">
        <text>betaine aldehyde + NAD(+) + H2O = glycine betaine + NADH + 2 H(+)</text>
        <dbReference type="Rhea" id="RHEA:15305"/>
        <dbReference type="ChEBI" id="CHEBI:15377"/>
        <dbReference type="ChEBI" id="CHEBI:15378"/>
        <dbReference type="ChEBI" id="CHEBI:15710"/>
        <dbReference type="ChEBI" id="CHEBI:17750"/>
        <dbReference type="ChEBI" id="CHEBI:57540"/>
        <dbReference type="ChEBI" id="CHEBI:57945"/>
        <dbReference type="EC" id="1.2.1.8"/>
    </reaction>
</comment>
<comment type="cofactor">
    <cofactor evidence="1">
        <name>FAD</name>
        <dbReference type="ChEBI" id="CHEBI:57692"/>
    </cofactor>
</comment>
<comment type="pathway">
    <text evidence="1">Amine and polyamine biosynthesis; betaine biosynthesis via choline pathway; betaine aldehyde from choline (cytochrome c reductase route): step 1/1.</text>
</comment>
<comment type="similarity">
    <text evidence="1">Belongs to the GMC oxidoreductase family.</text>
</comment>
<comment type="sequence caution" evidence="2">
    <conflict type="erroneous initiation">
        <sequence resource="EMBL-CDS" id="ABE05841"/>
    </conflict>
    <text>Extended N-terminus.</text>
</comment>
<dbReference type="EC" id="1.1.99.1" evidence="1"/>
<dbReference type="EC" id="1.2.1.8" evidence="1"/>
<dbReference type="EMBL" id="CP000243">
    <property type="protein sequence ID" value="ABE05841.1"/>
    <property type="status" value="ALT_INIT"/>
    <property type="molecule type" value="Genomic_DNA"/>
</dbReference>
<dbReference type="RefSeq" id="WP_001159135.1">
    <property type="nucleotide sequence ID" value="NZ_CP064825.1"/>
</dbReference>
<dbReference type="SMR" id="Q1RFM3"/>
<dbReference type="KEGG" id="eci:UTI89_C0340"/>
<dbReference type="HOGENOM" id="CLU_002865_7_1_6"/>
<dbReference type="UniPathway" id="UPA00529">
    <property type="reaction ID" value="UER00385"/>
</dbReference>
<dbReference type="Proteomes" id="UP000001952">
    <property type="component" value="Chromosome"/>
</dbReference>
<dbReference type="GO" id="GO:0016020">
    <property type="term" value="C:membrane"/>
    <property type="evidence" value="ECO:0007669"/>
    <property type="project" value="TreeGrafter"/>
</dbReference>
<dbReference type="GO" id="GO:0008802">
    <property type="term" value="F:betaine-aldehyde dehydrogenase (NAD+) activity"/>
    <property type="evidence" value="ECO:0007669"/>
    <property type="project" value="UniProtKB-EC"/>
</dbReference>
<dbReference type="GO" id="GO:0008812">
    <property type="term" value="F:choline dehydrogenase activity"/>
    <property type="evidence" value="ECO:0007669"/>
    <property type="project" value="UniProtKB-UniRule"/>
</dbReference>
<dbReference type="GO" id="GO:0050660">
    <property type="term" value="F:flavin adenine dinucleotide binding"/>
    <property type="evidence" value="ECO:0007669"/>
    <property type="project" value="InterPro"/>
</dbReference>
<dbReference type="GO" id="GO:0019285">
    <property type="term" value="P:glycine betaine biosynthetic process from choline"/>
    <property type="evidence" value="ECO:0007669"/>
    <property type="project" value="UniProtKB-UniRule"/>
</dbReference>
<dbReference type="Gene3D" id="3.50.50.60">
    <property type="entry name" value="FAD/NAD(P)-binding domain"/>
    <property type="match status" value="1"/>
</dbReference>
<dbReference type="Gene3D" id="3.30.560.10">
    <property type="entry name" value="Glucose Oxidase, domain 3"/>
    <property type="match status" value="1"/>
</dbReference>
<dbReference type="HAMAP" id="MF_00750">
    <property type="entry name" value="Choline_dehydrogen"/>
    <property type="match status" value="1"/>
</dbReference>
<dbReference type="InterPro" id="IPR011533">
    <property type="entry name" value="BetA"/>
</dbReference>
<dbReference type="InterPro" id="IPR036188">
    <property type="entry name" value="FAD/NAD-bd_sf"/>
</dbReference>
<dbReference type="InterPro" id="IPR012132">
    <property type="entry name" value="GMC_OxRdtase"/>
</dbReference>
<dbReference type="InterPro" id="IPR000172">
    <property type="entry name" value="GMC_OxRdtase_N"/>
</dbReference>
<dbReference type="InterPro" id="IPR007867">
    <property type="entry name" value="GMC_OxRtase_C"/>
</dbReference>
<dbReference type="NCBIfam" id="TIGR01810">
    <property type="entry name" value="betA"/>
    <property type="match status" value="1"/>
</dbReference>
<dbReference type="NCBIfam" id="NF002550">
    <property type="entry name" value="PRK02106.1"/>
    <property type="match status" value="1"/>
</dbReference>
<dbReference type="PANTHER" id="PTHR11552:SF147">
    <property type="entry name" value="CHOLINE DEHYDROGENASE, MITOCHONDRIAL"/>
    <property type="match status" value="1"/>
</dbReference>
<dbReference type="PANTHER" id="PTHR11552">
    <property type="entry name" value="GLUCOSE-METHANOL-CHOLINE GMC OXIDOREDUCTASE"/>
    <property type="match status" value="1"/>
</dbReference>
<dbReference type="Pfam" id="PF05199">
    <property type="entry name" value="GMC_oxred_C"/>
    <property type="match status" value="1"/>
</dbReference>
<dbReference type="Pfam" id="PF00732">
    <property type="entry name" value="GMC_oxred_N"/>
    <property type="match status" value="1"/>
</dbReference>
<dbReference type="PIRSF" id="PIRSF000137">
    <property type="entry name" value="Alcohol_oxidase"/>
    <property type="match status" value="1"/>
</dbReference>
<dbReference type="SUPFAM" id="SSF54373">
    <property type="entry name" value="FAD-linked reductases, C-terminal domain"/>
    <property type="match status" value="1"/>
</dbReference>
<dbReference type="SUPFAM" id="SSF51905">
    <property type="entry name" value="FAD/NAD(P)-binding domain"/>
    <property type="match status" value="1"/>
</dbReference>
<dbReference type="PROSITE" id="PS00623">
    <property type="entry name" value="GMC_OXRED_1"/>
    <property type="match status" value="1"/>
</dbReference>
<dbReference type="PROSITE" id="PS00624">
    <property type="entry name" value="GMC_OXRED_2"/>
    <property type="match status" value="1"/>
</dbReference>
<keyword id="KW-0274">FAD</keyword>
<keyword id="KW-0285">Flavoprotein</keyword>
<keyword id="KW-0520">NAD</keyword>
<keyword id="KW-0560">Oxidoreductase</keyword>
<reference key="1">
    <citation type="journal article" date="2006" name="Proc. Natl. Acad. Sci. U.S.A.">
        <title>Identification of genes subject to positive selection in uropathogenic strains of Escherichia coli: a comparative genomics approach.</title>
        <authorList>
            <person name="Chen S.L."/>
            <person name="Hung C.-S."/>
            <person name="Xu J."/>
            <person name="Reigstad C.S."/>
            <person name="Magrini V."/>
            <person name="Sabo A."/>
            <person name="Blasiar D."/>
            <person name="Bieri T."/>
            <person name="Meyer R.R."/>
            <person name="Ozersky P."/>
            <person name="Armstrong J.R."/>
            <person name="Fulton R.S."/>
            <person name="Latreille J.P."/>
            <person name="Spieth J."/>
            <person name="Hooton T.M."/>
            <person name="Mardis E.R."/>
            <person name="Hultgren S.J."/>
            <person name="Gordon J.I."/>
        </authorList>
    </citation>
    <scope>NUCLEOTIDE SEQUENCE [LARGE SCALE GENOMIC DNA]</scope>
    <source>
        <strain>UTI89 / UPEC</strain>
    </source>
</reference>
<evidence type="ECO:0000255" key="1">
    <source>
        <dbReference type="HAMAP-Rule" id="MF_00750"/>
    </source>
</evidence>
<evidence type="ECO:0000305" key="2"/>
<sequence length="562" mass="62677">MQFDYIIIGAGSAGNVLATRLTEDPNTTVLLLEAGGPDYRFDFRTQMPAALAFPLQGKRYNWAYETEPEPFMNNRRMECGRGKGLGGSSLINGMCYIRGNALDLDNWAQEPGLENWSYLDCLPYYRKAETRDVGENDYHGGDGPVSVTTSKPGVNPLFEAMIEAGVQAGYPRTDDLNGYQQEGFGPMDRTVTPHGRRASTARGYLDQAKSRPNLTIRTHAMTDHIFFDGKRAVGVEWLEGDSTIPTRAAANKEVLLCAGAIASPQILQRSGVGNAELLAEFDIPLVHELPGVGENLQDHLEMYLQYECKEPVSLYPALQWWNQPKIGAEWLFGGTGVGASNHFEAGGFIRSREEFAWPNIQYHFLPVAINYNGSNAVKEHGFQCHVGSMRSPSRGHVRIKSRDPHQHPAILFNYMSHEQDWQEFRDAIRITREIMHQPALDQYRGREISPGVECQTDEQLDEFVRNHAETAFHPCGTCKMGYDEMAVVDAEGRVHGLEGLRVVDASIMPQIITGNLNATTIMIGEKMADMIRGKDALPRSTARYFVANGMPVRAKKMSRDVN</sequence>